<keyword id="KW-1003">Cell membrane</keyword>
<keyword id="KW-0472">Membrane</keyword>
<keyword id="KW-1185">Reference proteome</keyword>
<keyword id="KW-0812">Transmembrane</keyword>
<keyword id="KW-1133">Transmembrane helix</keyword>
<feature type="chain" id="PRO_1000009479" description="UPF0114 protein ESA_00283">
    <location>
        <begin position="1"/>
        <end position="165"/>
    </location>
</feature>
<feature type="transmembrane region" description="Helical" evidence="1">
    <location>
        <begin position="15"/>
        <end position="35"/>
    </location>
</feature>
<feature type="transmembrane region" description="Helical" evidence="1">
    <location>
        <begin position="53"/>
        <end position="73"/>
    </location>
</feature>
<feature type="transmembrane region" description="Helical" evidence="1">
    <location>
        <begin position="136"/>
        <end position="156"/>
    </location>
</feature>
<evidence type="ECO:0000255" key="1">
    <source>
        <dbReference type="HAMAP-Rule" id="MF_00143"/>
    </source>
</evidence>
<gene>
    <name type="ordered locus">ESA_00283</name>
</gene>
<accession>A7MNC8</accession>
<reference key="1">
    <citation type="journal article" date="2010" name="PLoS ONE">
        <title>Genome sequence of Cronobacter sakazakii BAA-894 and comparative genomic hybridization analysis with other Cronobacter species.</title>
        <authorList>
            <person name="Kucerova E."/>
            <person name="Clifton S.W."/>
            <person name="Xia X.Q."/>
            <person name="Long F."/>
            <person name="Porwollik S."/>
            <person name="Fulton L."/>
            <person name="Fronick C."/>
            <person name="Minx P."/>
            <person name="Kyung K."/>
            <person name="Warren W."/>
            <person name="Fulton R."/>
            <person name="Feng D."/>
            <person name="Wollam A."/>
            <person name="Shah N."/>
            <person name="Bhonagiri V."/>
            <person name="Nash W.E."/>
            <person name="Hallsworth-Pepin K."/>
            <person name="Wilson R.K."/>
            <person name="McClelland M."/>
            <person name="Forsythe S.J."/>
        </authorList>
    </citation>
    <scope>NUCLEOTIDE SEQUENCE [LARGE SCALE GENOMIC DNA]</scope>
    <source>
        <strain>ATCC BAA-894</strain>
    </source>
</reference>
<organism>
    <name type="scientific">Cronobacter sakazakii (strain ATCC BAA-894)</name>
    <name type="common">Enterobacter sakazakii</name>
    <dbReference type="NCBI Taxonomy" id="290339"/>
    <lineage>
        <taxon>Bacteria</taxon>
        <taxon>Pseudomonadati</taxon>
        <taxon>Pseudomonadota</taxon>
        <taxon>Gammaproteobacteria</taxon>
        <taxon>Enterobacterales</taxon>
        <taxon>Enterobacteriaceae</taxon>
        <taxon>Cronobacter</taxon>
    </lineage>
</organism>
<protein>
    <recommendedName>
        <fullName evidence="1">UPF0114 protein ESA_00283</fullName>
    </recommendedName>
</protein>
<proteinExistence type="inferred from homology"/>
<sequence length="165" mass="18588">MERFIENAMYASRWLLAPVYFGLSLALLALTVKFFQEIIHVLPNILTIAEADLILLLLSLVDMTLVGGLLVMVMFSGYENFVSQLDIHEGKEKLSWLGKMDASSLKNKVAASIVAISSIHLLRVFMDAKNVPDNKLMWYVIIHLTFVLSAFVMGYLDKISRSKGY</sequence>
<name>Y283_CROS8</name>
<dbReference type="EMBL" id="CP000783">
    <property type="protein sequence ID" value="ABU75583.1"/>
    <property type="molecule type" value="Genomic_DNA"/>
</dbReference>
<dbReference type="RefSeq" id="WP_004384868.1">
    <property type="nucleotide sequence ID" value="NC_009778.1"/>
</dbReference>
<dbReference type="SMR" id="A7MNC8"/>
<dbReference type="KEGG" id="esa:ESA_00283"/>
<dbReference type="HOGENOM" id="CLU_097887_1_1_6"/>
<dbReference type="Proteomes" id="UP000000260">
    <property type="component" value="Chromosome"/>
</dbReference>
<dbReference type="GO" id="GO:0005886">
    <property type="term" value="C:plasma membrane"/>
    <property type="evidence" value="ECO:0007669"/>
    <property type="project" value="UniProtKB-SubCell"/>
</dbReference>
<dbReference type="HAMAP" id="MF_00143">
    <property type="entry name" value="UPF0114"/>
    <property type="match status" value="1"/>
</dbReference>
<dbReference type="InterPro" id="IPR005134">
    <property type="entry name" value="UPF0114"/>
</dbReference>
<dbReference type="InterPro" id="IPR020761">
    <property type="entry name" value="UPF0114_bac"/>
</dbReference>
<dbReference type="NCBIfam" id="TIGR00645">
    <property type="entry name" value="HI0507"/>
    <property type="match status" value="1"/>
</dbReference>
<dbReference type="PANTHER" id="PTHR38596">
    <property type="entry name" value="UPF0114 PROTEIN YQHA"/>
    <property type="match status" value="1"/>
</dbReference>
<dbReference type="PANTHER" id="PTHR38596:SF1">
    <property type="entry name" value="UPF0114 PROTEIN YQHA"/>
    <property type="match status" value="1"/>
</dbReference>
<dbReference type="Pfam" id="PF03350">
    <property type="entry name" value="UPF0114"/>
    <property type="match status" value="1"/>
</dbReference>
<comment type="subcellular location">
    <subcellularLocation>
        <location evidence="1">Cell membrane</location>
        <topology evidence="1">Multi-pass membrane protein</topology>
    </subcellularLocation>
</comment>
<comment type="similarity">
    <text evidence="1">Belongs to the UPF0114 family.</text>
</comment>